<comment type="function">
    <text evidence="1">Regulator of type 1 phosphatases which maintains protein phosphatase activity under strict control.</text>
</comment>
<comment type="subcellular location">
    <subcellularLocation>
        <location evidence="1">Nucleus</location>
    </subcellularLocation>
</comment>
<comment type="similarity">
    <text evidence="3">Belongs to the YPI1 family.</text>
</comment>
<protein>
    <recommendedName>
        <fullName>Type 1 phosphatases regulator YPI1</fullName>
    </recommendedName>
</protein>
<accession>A4RD36</accession>
<accession>G4NC94</accession>
<name>YPI1_PYRO7</name>
<proteinExistence type="inferred from homology"/>
<organism>
    <name type="scientific">Pyricularia oryzae (strain 70-15 / ATCC MYA-4617 / FGSC 8958)</name>
    <name type="common">Rice blast fungus</name>
    <name type="synonym">Magnaporthe oryzae</name>
    <dbReference type="NCBI Taxonomy" id="242507"/>
    <lineage>
        <taxon>Eukaryota</taxon>
        <taxon>Fungi</taxon>
        <taxon>Dikarya</taxon>
        <taxon>Ascomycota</taxon>
        <taxon>Pezizomycotina</taxon>
        <taxon>Sordariomycetes</taxon>
        <taxon>Sordariomycetidae</taxon>
        <taxon>Magnaporthales</taxon>
        <taxon>Pyriculariaceae</taxon>
        <taxon>Pyricularia</taxon>
    </lineage>
</organism>
<gene>
    <name type="primary">YPI1</name>
    <name type="ORF">MGG_01107</name>
</gene>
<keyword id="KW-0539">Nucleus</keyword>
<keyword id="KW-1185">Reference proteome</keyword>
<sequence>MASRQSRQQHTTSAPAASRTQTETSTPSQEQPPQDPTPEVRSQPAILRLRGVRASSGPSVRWAEGVVDNEGLGRKSSKVCCIYHPTKPVGESSDESSSDSSSDSGTDSDDSTRGKGKRKHRSGGGGGGKKHGEGDCHGHNHGHDHGSSSSSGGGGGARKKKKKRTPSPNAYEKMPKVKPRAPAPEGAPGASGQ</sequence>
<feature type="chain" id="PRO_0000333479" description="Type 1 phosphatases regulator YPI1">
    <location>
        <begin position="1"/>
        <end position="193"/>
    </location>
</feature>
<feature type="region of interest" description="Disordered" evidence="2">
    <location>
        <begin position="1"/>
        <end position="193"/>
    </location>
</feature>
<feature type="compositionally biased region" description="Polar residues" evidence="2">
    <location>
        <begin position="1"/>
        <end position="19"/>
    </location>
</feature>
<feature type="compositionally biased region" description="Low complexity" evidence="2">
    <location>
        <begin position="20"/>
        <end position="32"/>
    </location>
</feature>
<feature type="compositionally biased region" description="Basic and acidic residues" evidence="2">
    <location>
        <begin position="130"/>
        <end position="146"/>
    </location>
</feature>
<feature type="compositionally biased region" description="Low complexity" evidence="2">
    <location>
        <begin position="183"/>
        <end position="193"/>
    </location>
</feature>
<reference key="1">
    <citation type="journal article" date="2005" name="Nature">
        <title>The genome sequence of the rice blast fungus Magnaporthe grisea.</title>
        <authorList>
            <person name="Dean R.A."/>
            <person name="Talbot N.J."/>
            <person name="Ebbole D.J."/>
            <person name="Farman M.L."/>
            <person name="Mitchell T.K."/>
            <person name="Orbach M.J."/>
            <person name="Thon M.R."/>
            <person name="Kulkarni R."/>
            <person name="Xu J.-R."/>
            <person name="Pan H."/>
            <person name="Read N.D."/>
            <person name="Lee Y.-H."/>
            <person name="Carbone I."/>
            <person name="Brown D."/>
            <person name="Oh Y.Y."/>
            <person name="Donofrio N."/>
            <person name="Jeong J.S."/>
            <person name="Soanes D.M."/>
            <person name="Djonovic S."/>
            <person name="Kolomiets E."/>
            <person name="Rehmeyer C."/>
            <person name="Li W."/>
            <person name="Harding M."/>
            <person name="Kim S."/>
            <person name="Lebrun M.-H."/>
            <person name="Bohnert H."/>
            <person name="Coughlan S."/>
            <person name="Butler J."/>
            <person name="Calvo S.E."/>
            <person name="Ma L.-J."/>
            <person name="Nicol R."/>
            <person name="Purcell S."/>
            <person name="Nusbaum C."/>
            <person name="Galagan J.E."/>
            <person name="Birren B.W."/>
        </authorList>
    </citation>
    <scope>NUCLEOTIDE SEQUENCE [LARGE SCALE GENOMIC DNA]</scope>
    <source>
        <strain>70-15 / ATCC MYA-4617 / FGSC 8958</strain>
    </source>
</reference>
<dbReference type="EMBL" id="CM001235">
    <property type="protein sequence ID" value="EHA48243.1"/>
    <property type="molecule type" value="Genomic_DNA"/>
</dbReference>
<dbReference type="RefSeq" id="XP_003717827.1">
    <property type="nucleotide sequence ID" value="XM_003717779.1"/>
</dbReference>
<dbReference type="STRING" id="242507.A4RD36"/>
<dbReference type="EnsemblFungi" id="MGG_01107T0">
    <property type="protein sequence ID" value="MGG_01107T0"/>
    <property type="gene ID" value="MGG_01107"/>
</dbReference>
<dbReference type="GeneID" id="2675084"/>
<dbReference type="KEGG" id="mgr:MGG_01107"/>
<dbReference type="VEuPathDB" id="FungiDB:MGG_01107"/>
<dbReference type="eggNOG" id="KOG4102">
    <property type="taxonomic scope" value="Eukaryota"/>
</dbReference>
<dbReference type="HOGENOM" id="CLU_098333_0_1_1"/>
<dbReference type="InParanoid" id="A4RD36"/>
<dbReference type="OMA" id="RRHIQWA"/>
<dbReference type="OrthoDB" id="307488at2759"/>
<dbReference type="Proteomes" id="UP000009058">
    <property type="component" value="Chromosome 5"/>
</dbReference>
<dbReference type="GO" id="GO:0005634">
    <property type="term" value="C:nucleus"/>
    <property type="evidence" value="ECO:0007669"/>
    <property type="project" value="UniProtKB-SubCell"/>
</dbReference>
<dbReference type="GO" id="GO:0008157">
    <property type="term" value="F:protein phosphatase 1 binding"/>
    <property type="evidence" value="ECO:0007669"/>
    <property type="project" value="TreeGrafter"/>
</dbReference>
<dbReference type="GO" id="GO:0004865">
    <property type="term" value="F:protein serine/threonine phosphatase inhibitor activity"/>
    <property type="evidence" value="ECO:0007669"/>
    <property type="project" value="InterPro"/>
</dbReference>
<dbReference type="InterPro" id="IPR011107">
    <property type="entry name" value="PPI_Ypi1"/>
</dbReference>
<dbReference type="PANTHER" id="PTHR20835:SF0">
    <property type="entry name" value="E3 UBIQUITIN-PROTEIN LIGASE PPP1R11"/>
    <property type="match status" value="1"/>
</dbReference>
<dbReference type="PANTHER" id="PTHR20835">
    <property type="entry name" value="E3 UBIQUITIN-PROTEIN LIGASE PPP1R11-RELATED"/>
    <property type="match status" value="1"/>
</dbReference>
<dbReference type="Pfam" id="PF07491">
    <property type="entry name" value="PPI_Ypi1"/>
    <property type="match status" value="1"/>
</dbReference>
<evidence type="ECO:0000250" key="1"/>
<evidence type="ECO:0000256" key="2">
    <source>
        <dbReference type="SAM" id="MobiDB-lite"/>
    </source>
</evidence>
<evidence type="ECO:0000305" key="3"/>